<protein>
    <recommendedName>
        <fullName evidence="6">Dermonecrotic toxin SdSicTox-betaIIB1bii</fullName>
        <ecNumber evidence="4">4.6.1.-</ecNumber>
    </recommendedName>
    <alternativeName>
        <fullName>Phospholipase D</fullName>
        <shortName>PLD</shortName>
    </alternativeName>
    <alternativeName>
        <fullName>Sphingomyelin phosphodiesterase D</fullName>
        <shortName>SMD</shortName>
        <shortName>SMase D</shortName>
        <shortName>Sphingomyelinase D</shortName>
    </alternativeName>
</protein>
<sequence length="274" mass="31718">WIMGHMVNAIEQVDEFLNLGANAIEFDIDFDKDGIAQITHHGIPCDCGRKCTKKAIFTEYLDNIRQVTTPDDPKFREQLVLLALDLKLQRISSAKAYRAGEDVAKKLLDHYWQRGNSRARAYILLNIPSVEDYEFIRAFKDTLKNEGYESYNDKVGINFTGNEDLDKIRDVLEILGIHKQVWQADGITSCFARGTERLKEALEKRDTPGYNYINKVYAWTLVRKSIMRRSLRLGVDGVMSNNPDRVIKVLKEKEFADKFRLATYNDNPWEKFRG</sequence>
<reference key="1">
    <citation type="journal article" date="2009" name="Mol. Biol. Evol.">
        <title>Molecular evolution, functional variation, and proposed nomenclature of the gene family that includes sphingomyelinase D in sicariid spider venoms.</title>
        <authorList>
            <person name="Binford G.J."/>
            <person name="Bodner M.R."/>
            <person name="Cordes M.H."/>
            <person name="Baldwin K.L."/>
            <person name="Rynerson M.R."/>
            <person name="Burns S.N."/>
            <person name="Zobel-Thropp P.A."/>
        </authorList>
    </citation>
    <scope>NUCLEOTIDE SEQUENCE [MRNA]</scope>
    <scope>NOMENCLATURE</scope>
    <source>
        <tissue>Venom gland</tissue>
    </source>
</reference>
<proteinExistence type="evidence at transcript level"/>
<accession>C0JB72</accession>
<evidence type="ECO:0000250" key="1">
    <source>
        <dbReference type="UniProtKB" id="A0A0D4WTV1"/>
    </source>
</evidence>
<evidence type="ECO:0000250" key="2">
    <source>
        <dbReference type="UniProtKB" id="A0A0D4WV12"/>
    </source>
</evidence>
<evidence type="ECO:0000250" key="3">
    <source>
        <dbReference type="UniProtKB" id="P0CE80"/>
    </source>
</evidence>
<evidence type="ECO:0000250" key="4">
    <source>
        <dbReference type="UniProtKB" id="Q4ZFU2"/>
    </source>
</evidence>
<evidence type="ECO:0000250" key="5">
    <source>
        <dbReference type="UniProtKB" id="Q8I914"/>
    </source>
</evidence>
<evidence type="ECO:0000303" key="6">
    <source>
    </source>
</evidence>
<evidence type="ECO:0000305" key="7"/>
<evidence type="ECO:0000305" key="8">
    <source>
    </source>
</evidence>
<comment type="function">
    <text evidence="1 3">Dermonecrotic toxins cleave the phosphodiester linkage between the phosphate and headgroup of certain phospholipids (sphingolipid and lysolipid substrates), forming an alcohol (often choline) and a cyclic phosphate (By similarity). This toxin acts on sphingomyelin (SM) (By similarity). It may also act on ceramide phosphoethanolamine (CPE), lysophosphatidylcholine (LPC) and lysophosphatidylethanolamine (LPE), but not on lysophosphatidylserine (LPS), and lysophosphatidylglycerol (LPG) (By similarity). It acts by transphosphatidylation, releasing exclusively cyclic phosphate products as second products (By similarity). Induces dermonecrosis, hemolysis, increased vascular permeability, edema, inflammatory response, and platelet aggregation (By similarity).</text>
</comment>
<comment type="catalytic activity">
    <reaction evidence="1">
        <text>an N-(acyl)-sphingosylphosphocholine = an N-(acyl)-sphingosyl-1,3-cyclic phosphate + choline</text>
        <dbReference type="Rhea" id="RHEA:60652"/>
        <dbReference type="ChEBI" id="CHEBI:15354"/>
        <dbReference type="ChEBI" id="CHEBI:64583"/>
        <dbReference type="ChEBI" id="CHEBI:143892"/>
    </reaction>
</comment>
<comment type="catalytic activity">
    <reaction evidence="1">
        <text>an N-(acyl)-sphingosylphosphoethanolamine = an N-(acyl)-sphingosyl-1,3-cyclic phosphate + ethanolamine</text>
        <dbReference type="Rhea" id="RHEA:60648"/>
        <dbReference type="ChEBI" id="CHEBI:57603"/>
        <dbReference type="ChEBI" id="CHEBI:143891"/>
        <dbReference type="ChEBI" id="CHEBI:143892"/>
    </reaction>
</comment>
<comment type="catalytic activity">
    <reaction evidence="1">
        <text>a 1-acyl-sn-glycero-3-phosphocholine = a 1-acyl-sn-glycero-2,3-cyclic phosphate + choline</text>
        <dbReference type="Rhea" id="RHEA:60700"/>
        <dbReference type="ChEBI" id="CHEBI:15354"/>
        <dbReference type="ChEBI" id="CHEBI:58168"/>
        <dbReference type="ChEBI" id="CHEBI:143947"/>
    </reaction>
</comment>
<comment type="catalytic activity">
    <reaction evidence="1">
        <text>a 1-acyl-sn-glycero-3-phosphoethanolamine = a 1-acyl-sn-glycero-2,3-cyclic phosphate + ethanolamine</text>
        <dbReference type="Rhea" id="RHEA:60704"/>
        <dbReference type="ChEBI" id="CHEBI:57603"/>
        <dbReference type="ChEBI" id="CHEBI:64381"/>
        <dbReference type="ChEBI" id="CHEBI:143947"/>
    </reaction>
</comment>
<comment type="cofactor">
    <cofactor evidence="5">
        <name>Mg(2+)</name>
        <dbReference type="ChEBI" id="CHEBI:18420"/>
    </cofactor>
    <text evidence="5">Binds 1 Mg(2+) ion per subunit.</text>
</comment>
<comment type="subcellular location">
    <subcellularLocation>
        <location evidence="8">Secreted</location>
    </subcellularLocation>
</comment>
<comment type="tissue specificity">
    <text evidence="8">Expressed by the venom gland.</text>
</comment>
<comment type="similarity">
    <text evidence="7">Belongs to the arthropod phospholipase D family. Class II subfamily.</text>
</comment>
<comment type="caution">
    <text evidence="1 2 4">The most common activity assay for dermonecrotic toxins detects enzymatic activity by monitoring choline release from substrate. Liberation of choline from sphingomyelin (SM) or lysophosphatidylcholine (LPC) is commonly assumed to result from substrate hydrolysis, giving either ceramide-1-phosphate (C1P) or lysophosphatidic acid (LPA), respectively, as a second product. However, two studies from Lajoie and colleagues (2013 and 2015) report the observation of exclusive formation of cyclic phosphate products as second products, resulting from intramolecular transphosphatidylation. Cyclic phosphates have vastly different biological properties from their monoester counterparts, and they may be relevant to the pathology of brown spider envenomation.</text>
</comment>
<dbReference type="EC" id="4.6.1.-" evidence="4"/>
<dbReference type="EMBL" id="FJ171507">
    <property type="protein sequence ID" value="ACN49003.1"/>
    <property type="molecule type" value="mRNA"/>
</dbReference>
<dbReference type="SMR" id="C0JB72"/>
<dbReference type="GO" id="GO:0005576">
    <property type="term" value="C:extracellular region"/>
    <property type="evidence" value="ECO:0007669"/>
    <property type="project" value="UniProtKB-SubCell"/>
</dbReference>
<dbReference type="GO" id="GO:0016829">
    <property type="term" value="F:lyase activity"/>
    <property type="evidence" value="ECO:0007669"/>
    <property type="project" value="UniProtKB-KW"/>
</dbReference>
<dbReference type="GO" id="GO:0046872">
    <property type="term" value="F:metal ion binding"/>
    <property type="evidence" value="ECO:0007669"/>
    <property type="project" value="UniProtKB-KW"/>
</dbReference>
<dbReference type="GO" id="GO:0008081">
    <property type="term" value="F:phosphoric diester hydrolase activity"/>
    <property type="evidence" value="ECO:0007669"/>
    <property type="project" value="InterPro"/>
</dbReference>
<dbReference type="GO" id="GO:0090729">
    <property type="term" value="F:toxin activity"/>
    <property type="evidence" value="ECO:0007669"/>
    <property type="project" value="UniProtKB-KW"/>
</dbReference>
<dbReference type="GO" id="GO:0031640">
    <property type="term" value="P:killing of cells of another organism"/>
    <property type="evidence" value="ECO:0007669"/>
    <property type="project" value="UniProtKB-KW"/>
</dbReference>
<dbReference type="GO" id="GO:0016042">
    <property type="term" value="P:lipid catabolic process"/>
    <property type="evidence" value="ECO:0007669"/>
    <property type="project" value="UniProtKB-KW"/>
</dbReference>
<dbReference type="CDD" id="cd08576">
    <property type="entry name" value="GDPD_like_SMaseD_PLD"/>
    <property type="match status" value="1"/>
</dbReference>
<dbReference type="Gene3D" id="3.20.20.190">
    <property type="entry name" value="Phosphatidylinositol (PI) phosphodiesterase"/>
    <property type="match status" value="1"/>
</dbReference>
<dbReference type="InterPro" id="IPR017946">
    <property type="entry name" value="PLC-like_Pdiesterase_TIM-brl"/>
</dbReference>
<dbReference type="SUPFAM" id="SSF51695">
    <property type="entry name" value="PLC-like phosphodiesterases"/>
    <property type="match status" value="1"/>
</dbReference>
<name>B2KB2_SICCD</name>
<feature type="chain" id="PRO_0000392887" description="Dermonecrotic toxin SdSicTox-betaIIB1bii">
    <location>
        <begin position="1" status="less than"/>
        <end position="274"/>
    </location>
</feature>
<feature type="active site" evidence="5">
    <location>
        <position position="5"/>
    </location>
</feature>
<feature type="active site" description="Nucleophile" evidence="5">
    <location>
        <position position="41"/>
    </location>
</feature>
<feature type="binding site" evidence="5">
    <location>
        <position position="25"/>
    </location>
    <ligand>
        <name>Mg(2+)</name>
        <dbReference type="ChEBI" id="CHEBI:18420"/>
    </ligand>
</feature>
<feature type="binding site" evidence="5">
    <location>
        <position position="27"/>
    </location>
    <ligand>
        <name>Mg(2+)</name>
        <dbReference type="ChEBI" id="CHEBI:18420"/>
    </ligand>
</feature>
<feature type="binding site" evidence="5">
    <location>
        <position position="85"/>
    </location>
    <ligand>
        <name>Mg(2+)</name>
        <dbReference type="ChEBI" id="CHEBI:18420"/>
    </ligand>
</feature>
<feature type="disulfide bond" evidence="3">
    <location>
        <begin position="45"/>
        <end position="51"/>
    </location>
</feature>
<feature type="disulfide bond" evidence="3">
    <location>
        <begin position="47"/>
        <end position="190"/>
    </location>
</feature>
<feature type="non-terminal residue">
    <location>
        <position position="1"/>
    </location>
</feature>
<organism>
    <name type="scientific">Sicarius cf. damarensis (strain GJB-2008)</name>
    <name type="common">Six-eyed sand spider</name>
    <dbReference type="NCBI Taxonomy" id="575956"/>
    <lineage>
        <taxon>Eukaryota</taxon>
        <taxon>Metazoa</taxon>
        <taxon>Ecdysozoa</taxon>
        <taxon>Arthropoda</taxon>
        <taxon>Chelicerata</taxon>
        <taxon>Arachnida</taxon>
        <taxon>Araneae</taxon>
        <taxon>Araneomorphae</taxon>
        <taxon>Haplogynae</taxon>
        <taxon>Scytodoidea</taxon>
        <taxon>Sicariidae</taxon>
        <taxon>Sicarius</taxon>
    </lineage>
</organism>
<keyword id="KW-0204">Cytolysis</keyword>
<keyword id="KW-1061">Dermonecrotic toxin</keyword>
<keyword id="KW-1015">Disulfide bond</keyword>
<keyword id="KW-0354">Hemolysis</keyword>
<keyword id="KW-0442">Lipid degradation</keyword>
<keyword id="KW-0443">Lipid metabolism</keyword>
<keyword id="KW-0456">Lyase</keyword>
<keyword id="KW-0460">Magnesium</keyword>
<keyword id="KW-0479">Metal-binding</keyword>
<keyword id="KW-0964">Secreted</keyword>
<keyword id="KW-0800">Toxin</keyword>